<proteinExistence type="inferred from homology"/>
<accession>A4TPD3</accession>
<comment type="function">
    <text evidence="1">Catalyzes the hydrolysis of 4-amino-2-methyl-5-hydroxymethylpyrimidine pyrophosphate (HMP-PP) to 4-amino-2-methyl-5-hydroxymethylpyrimidine phosphate (HMP-P).</text>
</comment>
<comment type="catalytic activity">
    <reaction evidence="1">
        <text>4-amino-2-methyl-5-(diphosphooxymethyl)pyrimidine + H2O = 4-amino-2-methyl-5-(phosphooxymethyl)pyrimidine + phosphate + H(+)</text>
        <dbReference type="Rhea" id="RHEA:27914"/>
        <dbReference type="ChEBI" id="CHEBI:15377"/>
        <dbReference type="ChEBI" id="CHEBI:15378"/>
        <dbReference type="ChEBI" id="CHEBI:43474"/>
        <dbReference type="ChEBI" id="CHEBI:57841"/>
        <dbReference type="ChEBI" id="CHEBI:58354"/>
    </reaction>
</comment>
<comment type="cofactor">
    <cofactor evidence="1">
        <name>Mg(2+)</name>
        <dbReference type="ChEBI" id="CHEBI:18420"/>
    </cofactor>
</comment>
<comment type="similarity">
    <text evidence="1">Belongs to the HAD-like hydrolase superfamily. Cof family.</text>
</comment>
<protein>
    <recommendedName>
        <fullName evidence="1">HMP-PP phosphatase</fullName>
        <ecNumber evidence="1">3.6.1.-</ecNumber>
    </recommendedName>
</protein>
<reference key="1">
    <citation type="submission" date="2007-02" db="EMBL/GenBank/DDBJ databases">
        <title>Complete sequence of chromosome of Yersinia pestis Pestoides F.</title>
        <authorList>
            <consortium name="US DOE Joint Genome Institute"/>
            <person name="Copeland A."/>
            <person name="Lucas S."/>
            <person name="Lapidus A."/>
            <person name="Barry K."/>
            <person name="Detter J.C."/>
            <person name="Glavina del Rio T."/>
            <person name="Hammon N."/>
            <person name="Israni S."/>
            <person name="Dalin E."/>
            <person name="Tice H."/>
            <person name="Pitluck S."/>
            <person name="Di Bartolo G."/>
            <person name="Chain P."/>
            <person name="Malfatti S."/>
            <person name="Shin M."/>
            <person name="Vergez L."/>
            <person name="Schmutz J."/>
            <person name="Larimer F."/>
            <person name="Land M."/>
            <person name="Hauser L."/>
            <person name="Worsham P."/>
            <person name="Chu M."/>
            <person name="Bearden S."/>
            <person name="Garcia E."/>
            <person name="Richardson P."/>
        </authorList>
    </citation>
    <scope>NUCLEOTIDE SEQUENCE [LARGE SCALE GENOMIC DNA]</scope>
    <source>
        <strain>Pestoides F</strain>
    </source>
</reference>
<organism>
    <name type="scientific">Yersinia pestis (strain Pestoides F)</name>
    <dbReference type="NCBI Taxonomy" id="386656"/>
    <lineage>
        <taxon>Bacteria</taxon>
        <taxon>Pseudomonadati</taxon>
        <taxon>Pseudomonadota</taxon>
        <taxon>Gammaproteobacteria</taxon>
        <taxon>Enterobacterales</taxon>
        <taxon>Yersiniaceae</taxon>
        <taxon>Yersinia</taxon>
    </lineage>
</organism>
<name>COF_YERPP</name>
<gene>
    <name evidence="1" type="primary">cof</name>
    <name type="ordered locus">YPDSF_2783</name>
</gene>
<feature type="chain" id="PRO_0000343002" description="HMP-PP phosphatase">
    <location>
        <begin position="1"/>
        <end position="273"/>
    </location>
</feature>
<feature type="active site" description="Nucleophile" evidence="1">
    <location>
        <position position="8"/>
    </location>
</feature>
<feature type="binding site" evidence="1">
    <location>
        <position position="8"/>
    </location>
    <ligand>
        <name>Mg(2+)</name>
        <dbReference type="ChEBI" id="CHEBI:18420"/>
    </ligand>
</feature>
<feature type="binding site" evidence="1">
    <location>
        <position position="10"/>
    </location>
    <ligand>
        <name>Mg(2+)</name>
        <dbReference type="ChEBI" id="CHEBI:18420"/>
    </ligand>
</feature>
<feature type="binding site" evidence="1">
    <location>
        <position position="212"/>
    </location>
    <ligand>
        <name>Mg(2+)</name>
        <dbReference type="ChEBI" id="CHEBI:18420"/>
    </ligand>
</feature>
<dbReference type="EC" id="3.6.1.-" evidence="1"/>
<dbReference type="EMBL" id="CP000668">
    <property type="protein sequence ID" value="ABP41145.1"/>
    <property type="molecule type" value="Genomic_DNA"/>
</dbReference>
<dbReference type="RefSeq" id="WP_002208632.1">
    <property type="nucleotide sequence ID" value="NZ_CP009715.1"/>
</dbReference>
<dbReference type="SMR" id="A4TPD3"/>
<dbReference type="GeneID" id="57975563"/>
<dbReference type="KEGG" id="ypp:YPDSF_2783"/>
<dbReference type="PATRIC" id="fig|386656.14.peg.40"/>
<dbReference type="GO" id="GO:0002145">
    <property type="term" value="F:4-amino-5-hydroxymethyl-2-methylpyrimidine diphosphatase activity"/>
    <property type="evidence" value="ECO:0007669"/>
    <property type="project" value="RHEA"/>
</dbReference>
<dbReference type="GO" id="GO:0000287">
    <property type="term" value="F:magnesium ion binding"/>
    <property type="evidence" value="ECO:0000250"/>
    <property type="project" value="UniProtKB"/>
</dbReference>
<dbReference type="GO" id="GO:0016791">
    <property type="term" value="F:phosphatase activity"/>
    <property type="evidence" value="ECO:0000250"/>
    <property type="project" value="UniProtKB"/>
</dbReference>
<dbReference type="CDD" id="cd07516">
    <property type="entry name" value="HAD_Pase"/>
    <property type="match status" value="1"/>
</dbReference>
<dbReference type="FunFam" id="3.30.1240.10:FF:000018">
    <property type="entry name" value="HMP-PP phosphatase"/>
    <property type="match status" value="1"/>
</dbReference>
<dbReference type="Gene3D" id="3.30.1240.10">
    <property type="match status" value="1"/>
</dbReference>
<dbReference type="Gene3D" id="3.40.50.1000">
    <property type="entry name" value="HAD superfamily/HAD-like"/>
    <property type="match status" value="1"/>
</dbReference>
<dbReference type="HAMAP" id="MF_01847">
    <property type="entry name" value="HMP_PP_phosphat"/>
    <property type="match status" value="1"/>
</dbReference>
<dbReference type="InterPro" id="IPR000150">
    <property type="entry name" value="Cof"/>
</dbReference>
<dbReference type="InterPro" id="IPR036412">
    <property type="entry name" value="HAD-like_sf"/>
</dbReference>
<dbReference type="InterPro" id="IPR006379">
    <property type="entry name" value="HAD-SF_hydro_IIB"/>
</dbReference>
<dbReference type="InterPro" id="IPR023214">
    <property type="entry name" value="HAD_sf"/>
</dbReference>
<dbReference type="InterPro" id="IPR023938">
    <property type="entry name" value="HMP-PP_phosphatase"/>
</dbReference>
<dbReference type="NCBIfam" id="TIGR00099">
    <property type="entry name" value="Cof-subfamily"/>
    <property type="match status" value="1"/>
</dbReference>
<dbReference type="NCBIfam" id="TIGR01484">
    <property type="entry name" value="HAD-SF-IIB"/>
    <property type="match status" value="1"/>
</dbReference>
<dbReference type="NCBIfam" id="NF011705">
    <property type="entry name" value="PRK15126.1"/>
    <property type="match status" value="1"/>
</dbReference>
<dbReference type="PANTHER" id="PTHR47267">
    <property type="match status" value="1"/>
</dbReference>
<dbReference type="PANTHER" id="PTHR47267:SF2">
    <property type="entry name" value="HMP-PP PHOSPHATASE"/>
    <property type="match status" value="1"/>
</dbReference>
<dbReference type="Pfam" id="PF08282">
    <property type="entry name" value="Hydrolase_3"/>
    <property type="match status" value="1"/>
</dbReference>
<dbReference type="SFLD" id="SFLDG01140">
    <property type="entry name" value="C2.B:_Phosphomannomutase_and_P"/>
    <property type="match status" value="1"/>
</dbReference>
<dbReference type="SFLD" id="SFLDS00003">
    <property type="entry name" value="Haloacid_Dehalogenase"/>
    <property type="match status" value="1"/>
</dbReference>
<dbReference type="SUPFAM" id="SSF56784">
    <property type="entry name" value="HAD-like"/>
    <property type="match status" value="1"/>
</dbReference>
<dbReference type="PROSITE" id="PS01228">
    <property type="entry name" value="COF_1"/>
    <property type="match status" value="1"/>
</dbReference>
<dbReference type="PROSITE" id="PS01229">
    <property type="entry name" value="COF_2"/>
    <property type="match status" value="1"/>
</dbReference>
<keyword id="KW-0378">Hydrolase</keyword>
<keyword id="KW-0460">Magnesium</keyword>
<keyword id="KW-0479">Metal-binding</keyword>
<evidence type="ECO:0000255" key="1">
    <source>
        <dbReference type="HAMAP-Rule" id="MF_01847"/>
    </source>
</evidence>
<sequence>MYRLAAFDMDGTLLMRDHKIGSITLNALHQLADAGVTLTFATGRHYLDMKGILSHSGLNGYLITGNGTRVCDAEGNPLYGMDLPAELVEFVLRTPWQTNASIHLFRDDGWFTDRNDPDLLIAHTTSGFHFQLTEWDELPLTGNHKFCFIASHQELVELKAQLEQQMGGEADFCFSATDCLEVLPRGCNKGVALEKLSHHLDLTLADCMAFGDAMNDKEMLSRVGRGLVMGNALPQLKQELPQLQIIGRCEQQGVAHYLHHWLSSPHLTYSPEF</sequence>